<dbReference type="EC" id="4.1.1.39" evidence="1"/>
<dbReference type="EMBL" id="AE010299">
    <property type="protein sequence ID" value="AAM07894.1"/>
    <property type="molecule type" value="Genomic_DNA"/>
</dbReference>
<dbReference type="RefSeq" id="WP_011024428.1">
    <property type="nucleotide sequence ID" value="NC_003552.1"/>
</dbReference>
<dbReference type="SMR" id="Q8THG2"/>
<dbReference type="FunCoup" id="Q8THG2">
    <property type="interactions" value="78"/>
</dbReference>
<dbReference type="STRING" id="188937.MA_4555"/>
<dbReference type="EnsemblBacteria" id="AAM07894">
    <property type="protein sequence ID" value="AAM07894"/>
    <property type="gene ID" value="MA_4555"/>
</dbReference>
<dbReference type="GeneID" id="1476449"/>
<dbReference type="KEGG" id="mac:MA_4555"/>
<dbReference type="HOGENOM" id="CLU_031450_3_1_2"/>
<dbReference type="InParanoid" id="Q8THG2"/>
<dbReference type="OrthoDB" id="52787at2157"/>
<dbReference type="PhylomeDB" id="Q8THG2"/>
<dbReference type="BRENDA" id="4.1.1.39">
    <property type="organism ID" value="7224"/>
</dbReference>
<dbReference type="Proteomes" id="UP000002487">
    <property type="component" value="Chromosome"/>
</dbReference>
<dbReference type="GO" id="GO:0000287">
    <property type="term" value="F:magnesium ion binding"/>
    <property type="evidence" value="ECO:0007669"/>
    <property type="project" value="UniProtKB-UniRule"/>
</dbReference>
<dbReference type="GO" id="GO:0016491">
    <property type="term" value="F:oxidoreductase activity"/>
    <property type="evidence" value="ECO:0007669"/>
    <property type="project" value="UniProtKB-KW"/>
</dbReference>
<dbReference type="GO" id="GO:0016984">
    <property type="term" value="F:ribulose-bisphosphate carboxylase activity"/>
    <property type="evidence" value="ECO:0007669"/>
    <property type="project" value="UniProtKB-UniRule"/>
</dbReference>
<dbReference type="GO" id="GO:0006196">
    <property type="term" value="P:AMP catabolic process"/>
    <property type="evidence" value="ECO:0007669"/>
    <property type="project" value="UniProtKB-UniRule"/>
</dbReference>
<dbReference type="GO" id="GO:0015977">
    <property type="term" value="P:carbon fixation"/>
    <property type="evidence" value="ECO:0007669"/>
    <property type="project" value="UniProtKB-KW"/>
</dbReference>
<dbReference type="CDD" id="cd08213">
    <property type="entry name" value="RuBisCO_large_III"/>
    <property type="match status" value="1"/>
</dbReference>
<dbReference type="Gene3D" id="3.20.20.110">
    <property type="entry name" value="Ribulose bisphosphate carboxylase, large subunit, C-terminal domain"/>
    <property type="match status" value="1"/>
</dbReference>
<dbReference type="Gene3D" id="3.30.70.150">
    <property type="entry name" value="RuBisCO large subunit, N-terminal domain"/>
    <property type="match status" value="1"/>
</dbReference>
<dbReference type="HAMAP" id="MF_01133">
    <property type="entry name" value="RuBisCO_L_type3"/>
    <property type="match status" value="1"/>
</dbReference>
<dbReference type="InterPro" id="IPR033966">
    <property type="entry name" value="RuBisCO"/>
</dbReference>
<dbReference type="InterPro" id="IPR017712">
    <property type="entry name" value="RuBisCO_III"/>
</dbReference>
<dbReference type="InterPro" id="IPR000685">
    <property type="entry name" value="RuBisCO_lsu_C"/>
</dbReference>
<dbReference type="InterPro" id="IPR036376">
    <property type="entry name" value="RuBisCO_lsu_C_sf"/>
</dbReference>
<dbReference type="InterPro" id="IPR017443">
    <property type="entry name" value="RuBisCO_lsu_fd_N"/>
</dbReference>
<dbReference type="InterPro" id="IPR036422">
    <property type="entry name" value="RuBisCO_lsu_N_sf"/>
</dbReference>
<dbReference type="NCBIfam" id="NF003252">
    <property type="entry name" value="PRK04208.1"/>
    <property type="match status" value="1"/>
</dbReference>
<dbReference type="NCBIfam" id="TIGR03326">
    <property type="entry name" value="rubisco_III"/>
    <property type="match status" value="1"/>
</dbReference>
<dbReference type="PANTHER" id="PTHR42704">
    <property type="entry name" value="RIBULOSE BISPHOSPHATE CARBOXYLASE"/>
    <property type="match status" value="1"/>
</dbReference>
<dbReference type="PANTHER" id="PTHR42704:SF17">
    <property type="entry name" value="RIBULOSE BISPHOSPHATE CARBOXYLASE LARGE CHAIN"/>
    <property type="match status" value="1"/>
</dbReference>
<dbReference type="Pfam" id="PF00016">
    <property type="entry name" value="RuBisCO_large"/>
    <property type="match status" value="1"/>
</dbReference>
<dbReference type="Pfam" id="PF02788">
    <property type="entry name" value="RuBisCO_large_N"/>
    <property type="match status" value="1"/>
</dbReference>
<dbReference type="SFLD" id="SFLDS00014">
    <property type="entry name" value="RuBisCO"/>
    <property type="match status" value="1"/>
</dbReference>
<dbReference type="SFLD" id="SFLDG00301">
    <property type="entry name" value="RuBisCO-like_proteins"/>
    <property type="match status" value="1"/>
</dbReference>
<dbReference type="SUPFAM" id="SSF51649">
    <property type="entry name" value="RuBisCo, C-terminal domain"/>
    <property type="match status" value="1"/>
</dbReference>
<dbReference type="SUPFAM" id="SSF54966">
    <property type="entry name" value="RuBisCO, large subunit, small (N-terminal) domain"/>
    <property type="match status" value="1"/>
</dbReference>
<keyword id="KW-0120">Carbon dioxide fixation</keyword>
<keyword id="KW-0456">Lyase</keyword>
<keyword id="KW-0460">Magnesium</keyword>
<keyword id="KW-0479">Metal-binding</keyword>
<keyword id="KW-0560">Oxidoreductase</keyword>
<keyword id="KW-1185">Reference proteome</keyword>
<evidence type="ECO:0000255" key="1">
    <source>
        <dbReference type="HAMAP-Rule" id="MF_01133"/>
    </source>
</evidence>
<evidence type="ECO:0000269" key="2">
    <source>
    </source>
</evidence>
<name>RBL_METAC</name>
<accession>Q8THG2</accession>
<sequence>MRRDYVDPGYSPKDTDLICEFHIEPAAGISFEEASTHMAGESSIDSWTEISTLSPELAARLKPHVFYLDADTQTVRVAYSEDLFELGSVPQVLSAVAGNIFSMKIVDNLRLQDITFPKSMLREFEGPNFGLPGVRDIVGVKDRPLVGTIVKPKVGLTSEMHAEVAYNAFAGGCDLVKDDENLTDQKFNGFEKRAELTLKIAEKAEAETGERKMYLCNITAPTCEEMIRRLHVLKDLGASYAMIDIVPTGWTALQTLREAAADEGLALHAHRCMHSAFTRNPRHGVSMLLVAKLCRLIGLDQLHIGTVVGKMHGDKDEVLSIRDECVLDTVPADPEQHVLAQDWGGLKPMFPVASGGLAPTMIPDLYSIFGKEVIMQFGGGIHAHPMGTAAGAAACRQALEASLEGISLQDYAKDHKELEAALGKWLEK</sequence>
<reference key="1">
    <citation type="journal article" date="2002" name="Genome Res.">
        <title>The genome of Methanosarcina acetivorans reveals extensive metabolic and physiological diversity.</title>
        <authorList>
            <person name="Galagan J.E."/>
            <person name="Nusbaum C."/>
            <person name="Roy A."/>
            <person name="Endrizzi M.G."/>
            <person name="Macdonald P."/>
            <person name="FitzHugh W."/>
            <person name="Calvo S."/>
            <person name="Engels R."/>
            <person name="Smirnov S."/>
            <person name="Atnoor D."/>
            <person name="Brown A."/>
            <person name="Allen N."/>
            <person name="Naylor J."/>
            <person name="Stange-Thomann N."/>
            <person name="DeArellano K."/>
            <person name="Johnson R."/>
            <person name="Linton L."/>
            <person name="McEwan P."/>
            <person name="McKernan K."/>
            <person name="Talamas J."/>
            <person name="Tirrell A."/>
            <person name="Ye W."/>
            <person name="Zimmer A."/>
            <person name="Barber R.D."/>
            <person name="Cann I."/>
            <person name="Graham D.E."/>
            <person name="Grahame D.A."/>
            <person name="Guss A.M."/>
            <person name="Hedderich R."/>
            <person name="Ingram-Smith C."/>
            <person name="Kuettner H.C."/>
            <person name="Krzycki J.A."/>
            <person name="Leigh J.A."/>
            <person name="Li W."/>
            <person name="Liu J."/>
            <person name="Mukhopadhyay B."/>
            <person name="Reeve J.N."/>
            <person name="Smith K."/>
            <person name="Springer T.A."/>
            <person name="Umayam L.A."/>
            <person name="White O."/>
            <person name="White R.H."/>
            <person name="de Macario E.C."/>
            <person name="Ferry J.G."/>
            <person name="Jarrell K.F."/>
            <person name="Jing H."/>
            <person name="Macario A.J.L."/>
            <person name="Paulsen I.T."/>
            <person name="Pritchett M."/>
            <person name="Sowers K.R."/>
            <person name="Swanson R.V."/>
            <person name="Zinder S.H."/>
            <person name="Lander E."/>
            <person name="Metcalf W.W."/>
            <person name="Birren B."/>
        </authorList>
    </citation>
    <scope>NUCLEOTIDE SEQUENCE [LARGE SCALE GENOMIC DNA]</scope>
    <source>
        <strain>ATCC 35395 / DSM 2834 / JCM 12185 / C2A</strain>
    </source>
</reference>
<reference key="2">
    <citation type="journal article" date="2003" name="J. Bacteriol.">
        <title>Synthesis of catalytically active form III ribulose 1,5-bisphosphate carboxylase/oxygenase in archaea.</title>
        <authorList>
            <person name="Finn M.W."/>
            <person name="Tabita F.R."/>
        </authorList>
    </citation>
    <scope>CATALYTIC ACTIVITY</scope>
    <scope>ACTIVITY REGULATION</scope>
    <scope>BIOPHYSICOCHEMICAL PROPERTIES</scope>
    <scope>SUBUNIT</scope>
    <source>
        <strain>ATCC 35395 / DSM 2834 / JCM 12185 / C2A</strain>
    </source>
</reference>
<organism>
    <name type="scientific">Methanosarcina acetivorans (strain ATCC 35395 / DSM 2834 / JCM 12185 / C2A)</name>
    <dbReference type="NCBI Taxonomy" id="188937"/>
    <lineage>
        <taxon>Archaea</taxon>
        <taxon>Methanobacteriati</taxon>
        <taxon>Methanobacteriota</taxon>
        <taxon>Stenosarchaea group</taxon>
        <taxon>Methanomicrobia</taxon>
        <taxon>Methanosarcinales</taxon>
        <taxon>Methanosarcinaceae</taxon>
        <taxon>Methanosarcina</taxon>
    </lineage>
</organism>
<gene>
    <name evidence="1" type="primary">rbcL</name>
    <name type="ordered locus">MA_4555</name>
</gene>
<comment type="function">
    <text evidence="1">Catalyzes the addition of molecular CO(2) and H(2)O to ribulose 1,5-bisphosphate (RuBP), generating two molecules of 3-phosphoglycerate (3-PGA). Functions in an archaeal AMP degradation pathway, together with AMP phosphorylase and R15P isomerase.</text>
</comment>
<comment type="catalytic activity">
    <reaction evidence="1 2">
        <text>2 (2R)-3-phosphoglycerate + 2 H(+) = D-ribulose 1,5-bisphosphate + CO2 + H2O</text>
        <dbReference type="Rhea" id="RHEA:23124"/>
        <dbReference type="ChEBI" id="CHEBI:15377"/>
        <dbReference type="ChEBI" id="CHEBI:15378"/>
        <dbReference type="ChEBI" id="CHEBI:16526"/>
        <dbReference type="ChEBI" id="CHEBI:57870"/>
        <dbReference type="ChEBI" id="CHEBI:58272"/>
        <dbReference type="EC" id="4.1.1.39"/>
    </reaction>
</comment>
<comment type="catalytic activity">
    <reaction evidence="1 2">
        <text>D-ribulose 1,5-bisphosphate + O2 = 2-phosphoglycolate + (2R)-3-phosphoglycerate + 2 H(+)</text>
        <dbReference type="Rhea" id="RHEA:36631"/>
        <dbReference type="ChEBI" id="CHEBI:15378"/>
        <dbReference type="ChEBI" id="CHEBI:15379"/>
        <dbReference type="ChEBI" id="CHEBI:57870"/>
        <dbReference type="ChEBI" id="CHEBI:58033"/>
        <dbReference type="ChEBI" id="CHEBI:58272"/>
    </reaction>
</comment>
<comment type="cofactor">
    <cofactor evidence="1">
        <name>Mg(2+)</name>
        <dbReference type="ChEBI" id="CHEBI:18420"/>
    </cofactor>
    <text evidence="1">Binds 1 Mg(2+) ion per subunit.</text>
</comment>
<comment type="activity regulation">
    <text evidence="2">Reversibly inhibited by O(2).</text>
</comment>
<comment type="biophysicochemical properties">
    <temperatureDependence>
        <text evidence="2">Active from 25 to 40 degrees Celsius.</text>
    </temperatureDependence>
</comment>
<comment type="subunit">
    <text evidence="2">Homodimer. In contrast to form I RuBisCO, the form III RuBisCO is composed solely of large subunits.</text>
</comment>
<comment type="miscellaneous">
    <text evidence="1">Because the Archaea possessing a type III RuBisCO are all anaerobic, it is most likely that only the carboxylase activity of RuBisCO, and not the competitive oxygenase activity (by which RuBP reacts with O(2) to form one molecule of 3-phosphoglycerate and one molecule of 2-phosphoglycolate), is biologically relevant in these strains.</text>
</comment>
<comment type="similarity">
    <text evidence="1">Belongs to the RuBisCO large chain family. Type III subfamily.</text>
</comment>
<protein>
    <recommendedName>
        <fullName evidence="1">Ribulose bisphosphate carboxylase</fullName>
        <shortName evidence="1">RuBisCO</shortName>
        <ecNumber evidence="1">4.1.1.39</ecNumber>
    </recommendedName>
</protein>
<proteinExistence type="evidence at protein level"/>
<feature type="chain" id="PRO_0000062672" description="Ribulose bisphosphate carboxylase">
    <location>
        <begin position="1"/>
        <end position="428"/>
    </location>
</feature>
<feature type="active site" description="Proton acceptor" evidence="1">
    <location>
        <position position="151"/>
    </location>
</feature>
<feature type="active site" description="Proton acceptor" evidence="1">
    <location>
        <position position="270"/>
    </location>
</feature>
<feature type="binding site" evidence="1">
    <location>
        <position position="153"/>
    </location>
    <ligand>
        <name>substrate</name>
    </ligand>
</feature>
<feature type="binding site" description="via carbamate group" evidence="1">
    <location>
        <position position="177"/>
    </location>
    <ligand>
        <name>Mg(2+)</name>
        <dbReference type="ChEBI" id="CHEBI:18420"/>
    </ligand>
</feature>
<feature type="binding site" evidence="1">
    <location>
        <position position="179"/>
    </location>
    <ligand>
        <name>Mg(2+)</name>
        <dbReference type="ChEBI" id="CHEBI:18420"/>
    </ligand>
</feature>
<feature type="binding site" evidence="1">
    <location>
        <position position="180"/>
    </location>
    <ligand>
        <name>Mg(2+)</name>
        <dbReference type="ChEBI" id="CHEBI:18420"/>
    </ligand>
</feature>
<feature type="binding site" evidence="1">
    <location>
        <position position="271"/>
    </location>
    <ligand>
        <name>substrate</name>
    </ligand>
</feature>
<feature type="binding site" evidence="1">
    <location>
        <position position="303"/>
    </location>
    <ligand>
        <name>substrate</name>
    </ligand>
</feature>
<feature type="binding site" evidence="1">
    <location>
        <begin position="354"/>
        <end position="356"/>
    </location>
    <ligand>
        <name>substrate</name>
    </ligand>
</feature>
<feature type="binding site" evidence="1">
    <location>
        <begin position="376"/>
        <end position="379"/>
    </location>
    <ligand>
        <name>substrate</name>
    </ligand>
</feature>
<feature type="site" description="Transition state stabilizer" evidence="1">
    <location>
        <position position="310"/>
    </location>
</feature>
<feature type="modified residue" description="N6-carboxylysine" evidence="1">
    <location>
        <position position="177"/>
    </location>
</feature>